<sequence length="84" mass="9683">MSSRSTGERPFTDIITSTRYWIIHIPAITILFASGFLFVYTGLAYDVFGTPRPDEYYNSDNTKKPLVNKRFEAKQQLDEATKNK</sequence>
<proteinExistence type="inferred from homology"/>
<gene>
    <name evidence="1" type="primary">psbE</name>
    <name type="ordered locus">gsr0856</name>
</gene>
<evidence type="ECO:0000255" key="1">
    <source>
        <dbReference type="HAMAP-Rule" id="MF_00642"/>
    </source>
</evidence>
<evidence type="ECO:0000305" key="2">
    <source>
    </source>
</evidence>
<name>PSBE_GLOVI</name>
<reference key="1">
    <citation type="journal article" date="2003" name="DNA Res.">
        <title>Complete genome structure of Gloeobacter violaceus PCC 7421, a cyanobacterium that lacks thylakoids.</title>
        <authorList>
            <person name="Nakamura Y."/>
            <person name="Kaneko T."/>
            <person name="Sato S."/>
            <person name="Mimuro M."/>
            <person name="Miyashita H."/>
            <person name="Tsuchiya T."/>
            <person name="Sasamoto S."/>
            <person name="Watanabe A."/>
            <person name="Kawashima K."/>
            <person name="Kishida Y."/>
            <person name="Kiyokawa C."/>
            <person name="Kohara M."/>
            <person name="Matsumoto M."/>
            <person name="Matsuno A."/>
            <person name="Nakazaki N."/>
            <person name="Shimpo S."/>
            <person name="Takeuchi C."/>
            <person name="Yamada M."/>
            <person name="Tabata S."/>
        </authorList>
    </citation>
    <scope>NUCLEOTIDE SEQUENCE [LARGE SCALE GENOMIC DNA]</scope>
    <source>
        <strain>ATCC 29082 / PCC 7421</strain>
    </source>
</reference>
<feature type="chain" id="PRO_0000233215" description="Cytochrome b559 subunit alpha">
    <location>
        <begin position="1"/>
        <end position="84"/>
    </location>
</feature>
<feature type="transmembrane region" description="Helical" evidence="1">
    <location>
        <begin position="22"/>
        <end position="36"/>
    </location>
</feature>
<feature type="binding site" description="axial binding residue" evidence="1">
    <location>
        <position position="24"/>
    </location>
    <ligand>
        <name>heme</name>
        <dbReference type="ChEBI" id="CHEBI:30413"/>
        <note>ligand shared with beta subunit</note>
    </ligand>
    <ligandPart>
        <name>Fe</name>
        <dbReference type="ChEBI" id="CHEBI:18248"/>
    </ligandPart>
</feature>
<organism>
    <name type="scientific">Gloeobacter violaceus (strain ATCC 29082 / PCC 7421)</name>
    <dbReference type="NCBI Taxonomy" id="251221"/>
    <lineage>
        <taxon>Bacteria</taxon>
        <taxon>Bacillati</taxon>
        <taxon>Cyanobacteriota</taxon>
        <taxon>Cyanophyceae</taxon>
        <taxon>Gloeobacterales</taxon>
        <taxon>Gloeobacteraceae</taxon>
        <taxon>Gloeobacter</taxon>
    </lineage>
</organism>
<protein>
    <recommendedName>
        <fullName evidence="1">Cytochrome b559 subunit alpha</fullName>
    </recommendedName>
    <alternativeName>
        <fullName evidence="1">PSII reaction center subunit V</fullName>
    </alternativeName>
</protein>
<accession>Q7NMB0</accession>
<dbReference type="EMBL" id="BA000045">
    <property type="protein sequence ID" value="BAC88797.1"/>
    <property type="molecule type" value="Genomic_DNA"/>
</dbReference>
<dbReference type="RefSeq" id="NP_923802.1">
    <property type="nucleotide sequence ID" value="NC_005125.1"/>
</dbReference>
<dbReference type="RefSeq" id="WP_011140858.1">
    <property type="nucleotide sequence ID" value="NC_005125.1"/>
</dbReference>
<dbReference type="SMR" id="Q7NMB0"/>
<dbReference type="STRING" id="251221.gene:10758334"/>
<dbReference type="EnsemblBacteria" id="BAC88797">
    <property type="protein sequence ID" value="BAC88797"/>
    <property type="gene ID" value="BAC88797"/>
</dbReference>
<dbReference type="KEGG" id="gvi:gsr0856"/>
<dbReference type="PATRIC" id="fig|251221.4.peg.873"/>
<dbReference type="eggNOG" id="ENOG5032RR6">
    <property type="taxonomic scope" value="Bacteria"/>
</dbReference>
<dbReference type="HOGENOM" id="CLU_194095_0_0_3"/>
<dbReference type="InParanoid" id="Q7NMB0"/>
<dbReference type="OrthoDB" id="514620at2"/>
<dbReference type="PhylomeDB" id="Q7NMB0"/>
<dbReference type="Proteomes" id="UP000000557">
    <property type="component" value="Chromosome"/>
</dbReference>
<dbReference type="GO" id="GO:0009523">
    <property type="term" value="C:photosystem II"/>
    <property type="evidence" value="ECO:0007669"/>
    <property type="project" value="UniProtKB-KW"/>
</dbReference>
<dbReference type="GO" id="GO:0005886">
    <property type="term" value="C:plasma membrane"/>
    <property type="evidence" value="ECO:0007669"/>
    <property type="project" value="UniProtKB-SubCell"/>
</dbReference>
<dbReference type="GO" id="GO:0009055">
    <property type="term" value="F:electron transfer activity"/>
    <property type="evidence" value="ECO:0007669"/>
    <property type="project" value="UniProtKB-UniRule"/>
</dbReference>
<dbReference type="GO" id="GO:0020037">
    <property type="term" value="F:heme binding"/>
    <property type="evidence" value="ECO:0007669"/>
    <property type="project" value="InterPro"/>
</dbReference>
<dbReference type="GO" id="GO:0005506">
    <property type="term" value="F:iron ion binding"/>
    <property type="evidence" value="ECO:0007669"/>
    <property type="project" value="UniProtKB-UniRule"/>
</dbReference>
<dbReference type="GO" id="GO:0009767">
    <property type="term" value="P:photosynthetic electron transport chain"/>
    <property type="evidence" value="ECO:0007669"/>
    <property type="project" value="InterPro"/>
</dbReference>
<dbReference type="Gene3D" id="1.20.5.860">
    <property type="entry name" value="Photosystem II cytochrome b559, alpha subunit"/>
    <property type="match status" value="1"/>
</dbReference>
<dbReference type="HAMAP" id="MF_00642">
    <property type="entry name" value="PSII_PsbE"/>
    <property type="match status" value="1"/>
</dbReference>
<dbReference type="InterPro" id="IPR006217">
    <property type="entry name" value="PSII_cyt_b559_asu"/>
</dbReference>
<dbReference type="InterPro" id="IPR037025">
    <property type="entry name" value="PSII_cyt_b559_asu_sf"/>
</dbReference>
<dbReference type="InterPro" id="IPR013081">
    <property type="entry name" value="PSII_cyt_b559_N"/>
</dbReference>
<dbReference type="InterPro" id="IPR013082">
    <property type="entry name" value="PSII_cytb559_asu_lum"/>
</dbReference>
<dbReference type="NCBIfam" id="TIGR01332">
    <property type="entry name" value="cyt_b559_alpha"/>
    <property type="match status" value="1"/>
</dbReference>
<dbReference type="PANTHER" id="PTHR33391">
    <property type="entry name" value="CYTOCHROME B559 SUBUNIT BETA-RELATED"/>
    <property type="match status" value="1"/>
</dbReference>
<dbReference type="PANTHER" id="PTHR33391:SF9">
    <property type="entry name" value="CYTOCHROME B559 SUBUNIT BETA-RELATED"/>
    <property type="match status" value="1"/>
</dbReference>
<dbReference type="Pfam" id="PF00283">
    <property type="entry name" value="Cytochrom_B559"/>
    <property type="match status" value="1"/>
</dbReference>
<dbReference type="Pfam" id="PF00284">
    <property type="entry name" value="Cytochrom_B559a"/>
    <property type="match status" value="1"/>
</dbReference>
<dbReference type="PIRSF" id="PIRSF000036">
    <property type="entry name" value="PsbE"/>
    <property type="match status" value="1"/>
</dbReference>
<dbReference type="SUPFAM" id="SSF161045">
    <property type="entry name" value="Cytochrome b559 subunits"/>
    <property type="match status" value="1"/>
</dbReference>
<comment type="function">
    <text evidence="1">This b-type cytochrome is tightly associated with the reaction center of photosystem II (PSII). PSII is a light-driven water:plastoquinone oxidoreductase that uses light energy to abstract electrons from H(2)O, generating O(2) and a proton gradient subsequently used for ATP formation. It consists of a core antenna complex that captures photons, and an electron transfer chain that converts photonic excitation into a charge separation.</text>
</comment>
<comment type="cofactor">
    <cofactor evidence="1">
        <name>heme b</name>
        <dbReference type="ChEBI" id="CHEBI:60344"/>
    </cofactor>
    <text evidence="1">With its partner (PsbF) binds heme. PSII binds additional chlorophylls, carotenoids and specific lipids.</text>
</comment>
<comment type="subunit">
    <text evidence="2">Heterodimer of an alpha subunit and a beta subunit. PSII is composed of 1 copy each of membrane proteins PsbA, PsbB, PsbC, PsbD, PsbE, PsbF, PsbH, PsbI, PsbJ, PsbK, PsbL, PsbM, PsbT, PsbX, Psb30/Ycf12, peripheral proteins PsbO, CyanoQ (PsbQ), PsbU, PsbV and a large number of cofactors. It forms dimeric complexes.</text>
</comment>
<comment type="subcellular location">
    <subcellularLocation>
        <location evidence="1">Cell inner membrane</location>
        <topology evidence="1">Single-pass membrane protein</topology>
    </subcellularLocation>
</comment>
<comment type="similarity">
    <text evidence="1">Belongs to the PsbE/PsbF family.</text>
</comment>
<keyword id="KW-0997">Cell inner membrane</keyword>
<keyword id="KW-1003">Cell membrane</keyword>
<keyword id="KW-0249">Electron transport</keyword>
<keyword id="KW-0349">Heme</keyword>
<keyword id="KW-0408">Iron</keyword>
<keyword id="KW-0472">Membrane</keyword>
<keyword id="KW-0479">Metal-binding</keyword>
<keyword id="KW-0602">Photosynthesis</keyword>
<keyword id="KW-0604">Photosystem II</keyword>
<keyword id="KW-1185">Reference proteome</keyword>
<keyword id="KW-0812">Transmembrane</keyword>
<keyword id="KW-1133">Transmembrane helix</keyword>
<keyword id="KW-0813">Transport</keyword>